<evidence type="ECO:0000255" key="1">
    <source>
        <dbReference type="HAMAP-Rule" id="MF_01008"/>
    </source>
</evidence>
<evidence type="ECO:0000255" key="2">
    <source>
        <dbReference type="PROSITE-ProRule" id="PRU01076"/>
    </source>
</evidence>
<evidence type="ECO:0000269" key="3">
    <source>
    </source>
</evidence>
<evidence type="ECO:0000269" key="4">
    <source>
    </source>
</evidence>
<evidence type="ECO:0000305" key="5">
    <source>
    </source>
</evidence>
<reference key="1">
    <citation type="journal article" date="1990" name="Nucleic Acids Res.">
        <title>Nucleotide sequence of the regulatory region of the gene pbpB of Escherichia coli.</title>
        <authorList>
            <person name="Gomez M.J."/>
            <person name="Fluoret B."/>
            <person name="van Heijenoort J."/>
            <person name="Ayala J.A."/>
        </authorList>
    </citation>
    <scope>NUCLEOTIDE SEQUENCE [GENOMIC DNA]</scope>
    <source>
        <strain>K12</strain>
    </source>
</reference>
<reference key="2">
    <citation type="journal article" date="1992" name="Nucleic Acids Res.">
        <title>Systematic sequencing of the Escherichia coli genome: analysis of the 0-2.4 min region.</title>
        <authorList>
            <person name="Yura T."/>
            <person name="Mori H."/>
            <person name="Nagai H."/>
            <person name="Nagata T."/>
            <person name="Ishihama A."/>
            <person name="Fujita N."/>
            <person name="Isono K."/>
            <person name="Mizobuchi K."/>
            <person name="Nakata A."/>
        </authorList>
    </citation>
    <scope>NUCLEOTIDE SEQUENCE [LARGE SCALE GENOMIC DNA]</scope>
    <source>
        <strain>K12</strain>
    </source>
</reference>
<reference key="3">
    <citation type="journal article" date="1997" name="Science">
        <title>The complete genome sequence of Escherichia coli K-12.</title>
        <authorList>
            <person name="Blattner F.R."/>
            <person name="Plunkett G. III"/>
            <person name="Bloch C.A."/>
            <person name="Perna N.T."/>
            <person name="Burland V."/>
            <person name="Riley M."/>
            <person name="Collado-Vides J."/>
            <person name="Glasner J.D."/>
            <person name="Rode C.K."/>
            <person name="Mayhew G.F."/>
            <person name="Gregor J."/>
            <person name="Davis N.W."/>
            <person name="Kirkpatrick H.A."/>
            <person name="Goeden M.A."/>
            <person name="Rose D.J."/>
            <person name="Mau B."/>
            <person name="Shao Y."/>
        </authorList>
    </citation>
    <scope>NUCLEOTIDE SEQUENCE [LARGE SCALE GENOMIC DNA]</scope>
    <source>
        <strain>K12 / MG1655 / ATCC 47076</strain>
    </source>
</reference>
<reference key="4">
    <citation type="journal article" date="2006" name="Mol. Syst. Biol.">
        <title>Highly accurate genome sequences of Escherichia coli K-12 strains MG1655 and W3110.</title>
        <authorList>
            <person name="Hayashi K."/>
            <person name="Morooka N."/>
            <person name="Yamamoto Y."/>
            <person name="Fujita K."/>
            <person name="Isono K."/>
            <person name="Choi S."/>
            <person name="Ohtsubo E."/>
            <person name="Baba T."/>
            <person name="Wanner B.L."/>
            <person name="Mori H."/>
            <person name="Horiuchi T."/>
        </authorList>
    </citation>
    <scope>NUCLEOTIDE SEQUENCE [LARGE SCALE GENOMIC DNA]</scope>
    <source>
        <strain>K12 / W3110 / ATCC 27325 / DSM 5911</strain>
    </source>
</reference>
<reference key="5">
    <citation type="journal article" date="2014" name="J. Bacteriol.">
        <title>The highly conserved MraZ protein is a transcriptional regulator in Escherichia coli.</title>
        <authorList>
            <person name="Eraso J.M."/>
            <person name="Markillie L.M."/>
            <person name="Mitchell H.D."/>
            <person name="Taylor R.C."/>
            <person name="Orr G."/>
            <person name="Margolin W."/>
        </authorList>
    </citation>
    <scope>FUNCTION</scope>
    <scope>DNA-BINDING</scope>
    <scope>SUBCELLULAR LOCATION</scope>
    <scope>INDUCTION</scope>
    <scope>DISRUPTION PHENOTYPE</scope>
    <scope>MUTAGENESIS OF ARG-15</scope>
    <source>
        <strain>K12 / MG1655 / ATCC 47076</strain>
    </source>
</reference>
<reference key="6">
    <citation type="journal article" date="2005" name="Acta Crystallogr. F">
        <title>MraZ from Escherichia coli: cloning, purification, crystallization and preliminary X-ray analysis.</title>
        <authorList>
            <person name="Adams M.A."/>
            <person name="Udell C.M."/>
            <person name="Pal G.P."/>
            <person name="Jia Z."/>
        </authorList>
    </citation>
    <scope>CRYSTALLIZATION</scope>
    <scope>SUBUNIT</scope>
</reference>
<keyword id="KW-0963">Cytoplasm</keyword>
<keyword id="KW-0238">DNA-binding</keyword>
<keyword id="KW-1185">Reference proteome</keyword>
<keyword id="KW-0677">Repeat</keyword>
<keyword id="KW-0678">Repressor</keyword>
<keyword id="KW-0804">Transcription</keyword>
<keyword id="KW-0805">Transcription regulation</keyword>
<accession>P22186</accession>
<dbReference type="EMBL" id="X52063">
    <property type="protein sequence ID" value="CAA36284.1"/>
    <property type="molecule type" value="Genomic_DNA"/>
</dbReference>
<dbReference type="EMBL" id="X55034">
    <property type="protein sequence ID" value="CAA38858.1"/>
    <property type="molecule type" value="Genomic_DNA"/>
</dbReference>
<dbReference type="EMBL" id="U00096">
    <property type="protein sequence ID" value="AAC73192.1"/>
    <property type="molecule type" value="Genomic_DNA"/>
</dbReference>
<dbReference type="EMBL" id="AP009048">
    <property type="protein sequence ID" value="BAB96649.1"/>
    <property type="molecule type" value="Genomic_DNA"/>
</dbReference>
<dbReference type="PIR" id="S14388">
    <property type="entry name" value="S14388"/>
</dbReference>
<dbReference type="RefSeq" id="NP_414623.1">
    <property type="nucleotide sequence ID" value="NC_000913.3"/>
</dbReference>
<dbReference type="RefSeq" id="WP_001295533.1">
    <property type="nucleotide sequence ID" value="NZ_STEB01000010.1"/>
</dbReference>
<dbReference type="SMR" id="P22186"/>
<dbReference type="BioGRID" id="4261640">
    <property type="interactions" value="159"/>
</dbReference>
<dbReference type="DIP" id="DIP-11166N"/>
<dbReference type="FunCoup" id="P22186">
    <property type="interactions" value="259"/>
</dbReference>
<dbReference type="IntAct" id="P22186">
    <property type="interactions" value="5"/>
</dbReference>
<dbReference type="STRING" id="511145.b0081"/>
<dbReference type="jPOST" id="P22186"/>
<dbReference type="PaxDb" id="511145-b0081"/>
<dbReference type="EnsemblBacteria" id="AAC73192">
    <property type="protein sequence ID" value="AAC73192"/>
    <property type="gene ID" value="b0081"/>
</dbReference>
<dbReference type="GeneID" id="944810"/>
<dbReference type="KEGG" id="ecj:JW0079"/>
<dbReference type="KEGG" id="eco:b0081"/>
<dbReference type="PATRIC" id="fig|1411691.4.peg.2199"/>
<dbReference type="EchoBASE" id="EB1076"/>
<dbReference type="eggNOG" id="COG2001">
    <property type="taxonomic scope" value="Bacteria"/>
</dbReference>
<dbReference type="HOGENOM" id="CLU_107907_2_0_6"/>
<dbReference type="InParanoid" id="P22186"/>
<dbReference type="OMA" id="ECELDGN"/>
<dbReference type="OrthoDB" id="9807753at2"/>
<dbReference type="PhylomeDB" id="P22186"/>
<dbReference type="BioCyc" id="EcoCyc:EG11084-MONOMER"/>
<dbReference type="PRO" id="PR:P22186"/>
<dbReference type="Proteomes" id="UP000000625">
    <property type="component" value="Chromosome"/>
</dbReference>
<dbReference type="GO" id="GO:0005737">
    <property type="term" value="C:cytoplasm"/>
    <property type="evidence" value="ECO:0007669"/>
    <property type="project" value="UniProtKB-UniRule"/>
</dbReference>
<dbReference type="GO" id="GO:0009295">
    <property type="term" value="C:nucleoid"/>
    <property type="evidence" value="ECO:0007669"/>
    <property type="project" value="UniProtKB-SubCell"/>
</dbReference>
<dbReference type="GO" id="GO:0003700">
    <property type="term" value="F:DNA-binding transcription factor activity"/>
    <property type="evidence" value="ECO:0000314"/>
    <property type="project" value="EcoCyc"/>
</dbReference>
<dbReference type="GO" id="GO:0043565">
    <property type="term" value="F:sequence-specific DNA binding"/>
    <property type="evidence" value="ECO:0000255"/>
    <property type="project" value="EcoCyc"/>
</dbReference>
<dbReference type="GO" id="GO:0000976">
    <property type="term" value="F:transcription cis-regulatory region binding"/>
    <property type="evidence" value="ECO:0000314"/>
    <property type="project" value="EcoCyc"/>
</dbReference>
<dbReference type="GO" id="GO:0045892">
    <property type="term" value="P:negative regulation of DNA-templated transcription"/>
    <property type="evidence" value="ECO:0000270"/>
    <property type="project" value="EcoCyc"/>
</dbReference>
<dbReference type="GO" id="GO:2000143">
    <property type="term" value="P:negative regulation of DNA-templated transcription initiation"/>
    <property type="evidence" value="ECO:0000270"/>
    <property type="project" value="EcoCyc"/>
</dbReference>
<dbReference type="CDD" id="cd16321">
    <property type="entry name" value="MraZ_C"/>
    <property type="match status" value="1"/>
</dbReference>
<dbReference type="CDD" id="cd16320">
    <property type="entry name" value="MraZ_N"/>
    <property type="match status" value="1"/>
</dbReference>
<dbReference type="FunFam" id="3.40.1550.20:FF:000001">
    <property type="entry name" value="Transcriptional regulator MraZ"/>
    <property type="match status" value="1"/>
</dbReference>
<dbReference type="Gene3D" id="3.40.1550.20">
    <property type="entry name" value="Transcriptional regulator MraZ domain"/>
    <property type="match status" value="1"/>
</dbReference>
<dbReference type="HAMAP" id="MF_01008">
    <property type="entry name" value="MraZ"/>
    <property type="match status" value="1"/>
</dbReference>
<dbReference type="InterPro" id="IPR003444">
    <property type="entry name" value="MraZ"/>
</dbReference>
<dbReference type="InterPro" id="IPR035644">
    <property type="entry name" value="MraZ_C"/>
</dbReference>
<dbReference type="InterPro" id="IPR020603">
    <property type="entry name" value="MraZ_dom"/>
</dbReference>
<dbReference type="InterPro" id="IPR035642">
    <property type="entry name" value="MraZ_N"/>
</dbReference>
<dbReference type="InterPro" id="IPR038619">
    <property type="entry name" value="MraZ_sf"/>
</dbReference>
<dbReference type="InterPro" id="IPR007159">
    <property type="entry name" value="SpoVT-AbrB_dom"/>
</dbReference>
<dbReference type="InterPro" id="IPR037914">
    <property type="entry name" value="SpoVT-AbrB_sf"/>
</dbReference>
<dbReference type="NCBIfam" id="TIGR00242">
    <property type="entry name" value="division/cell wall cluster transcriptional repressor MraZ"/>
    <property type="match status" value="1"/>
</dbReference>
<dbReference type="PANTHER" id="PTHR34701">
    <property type="entry name" value="TRANSCRIPTIONAL REGULATOR MRAZ"/>
    <property type="match status" value="1"/>
</dbReference>
<dbReference type="PANTHER" id="PTHR34701:SF1">
    <property type="entry name" value="TRANSCRIPTIONAL REGULATOR MRAZ"/>
    <property type="match status" value="1"/>
</dbReference>
<dbReference type="Pfam" id="PF02381">
    <property type="entry name" value="MraZ"/>
    <property type="match status" value="2"/>
</dbReference>
<dbReference type="SUPFAM" id="SSF89447">
    <property type="entry name" value="AbrB/MazE/MraZ-like"/>
    <property type="match status" value="1"/>
</dbReference>
<dbReference type="PROSITE" id="PS51740">
    <property type="entry name" value="SPOVT_ABRB"/>
    <property type="match status" value="2"/>
</dbReference>
<comment type="function">
    <text evidence="1 4">Negatively regulates its own expression and that of the subsequent genes in the proximal part of the division and cell wall (dcw) gene cluster. Acts by binding directly to DNA. May also regulate the expression of genes outside the dcw cluster.</text>
</comment>
<comment type="subunit">
    <text evidence="3">Dodecamer.</text>
</comment>
<comment type="subcellular location">
    <subcellularLocation>
        <location evidence="1 4">Cytoplasm</location>
        <location evidence="1 4">Nucleoid</location>
    </subcellularLocation>
</comment>
<comment type="induction">
    <text evidence="4">Negatively autoregulated.</text>
</comment>
<comment type="disruption phenotype">
    <text evidence="4">Mutants have no detectable phenotype under standard laboratory conditions. They are more resistant to trimethoprim than wild-type cells.</text>
</comment>
<comment type="miscellaneous">
    <text evidence="5">Overproduction is lethal and perturbs cell division. It destabilizes the divisome, but does not affect FtsZ levels or prevent Z ring assembly. Co-overproduction of RsmH (MraW) protects the cell from the toxic effects of MraZ overproduction (PubMed:24659771).</text>
</comment>
<comment type="similarity">
    <text evidence="1">Belongs to the MraZ family.</text>
</comment>
<sequence>MFRGATLVNLDSKGRLSVPTRYREQLLENAAGQMVCTIDIYHPCLLLYPLPEWEIIEQKLSRLSSMNPVERRVQRLLLGHASECQMDGAGRLLIAPVLRQHAGLTKEVMLVGQFNKFELWDETTWHQQVKEDIDAEQLATGDLSERLQDLSL</sequence>
<feature type="chain" id="PRO_0000108479" description="Transcriptional regulator MraZ">
    <location>
        <begin position="1"/>
        <end position="152"/>
    </location>
</feature>
<feature type="domain" description="SpoVT-AbrB 1" evidence="2">
    <location>
        <begin position="5"/>
        <end position="52"/>
    </location>
</feature>
<feature type="domain" description="SpoVT-AbrB 2" evidence="2">
    <location>
        <begin position="81"/>
        <end position="124"/>
    </location>
</feature>
<feature type="mutagenesis site" description="Abolishes DNA binding." evidence="4">
    <original>R</original>
    <variation>A</variation>
    <location>
        <position position="15"/>
    </location>
</feature>
<protein>
    <recommendedName>
        <fullName>Transcriptional regulator MraZ</fullName>
    </recommendedName>
</protein>
<organism>
    <name type="scientific">Escherichia coli (strain K12)</name>
    <dbReference type="NCBI Taxonomy" id="83333"/>
    <lineage>
        <taxon>Bacteria</taxon>
        <taxon>Pseudomonadati</taxon>
        <taxon>Pseudomonadota</taxon>
        <taxon>Gammaproteobacteria</taxon>
        <taxon>Enterobacterales</taxon>
        <taxon>Enterobacteriaceae</taxon>
        <taxon>Escherichia</taxon>
    </lineage>
</organism>
<gene>
    <name evidence="1" type="primary">mraZ</name>
    <name type="synonym">yabB</name>
    <name type="ordered locus">b0081</name>
    <name type="ordered locus">JW0079</name>
</gene>
<name>MRAZ_ECOLI</name>
<proteinExistence type="evidence at protein level"/>